<keyword id="KW-0903">Direct protein sequencing</keyword>
<keyword id="KW-0964">Secreted</keyword>
<organism evidence="2">
    <name type="scientific">Tityus serrulatus</name>
    <name type="common">Brazilian scorpion</name>
    <dbReference type="NCBI Taxonomy" id="6887"/>
    <lineage>
        <taxon>Eukaryota</taxon>
        <taxon>Metazoa</taxon>
        <taxon>Ecdysozoa</taxon>
        <taxon>Arthropoda</taxon>
        <taxon>Chelicerata</taxon>
        <taxon>Arachnida</taxon>
        <taxon>Scorpiones</taxon>
        <taxon>Buthida</taxon>
        <taxon>Buthoidea</taxon>
        <taxon>Buthidae</taxon>
        <taxon>Tityus</taxon>
    </lineage>
</organism>
<accession>C0HJJ9</accession>
<protein>
    <recommendedName>
        <fullName evidence="2">Peptide 9797</fullName>
    </recommendedName>
    <alternativeName>
        <fullName evidence="2">Peptide Ts20</fullName>
    </alternativeName>
</protein>
<sequence length="10" mass="1231">AENRERVMVQ</sequence>
<name>T9797_TITSE</name>
<evidence type="ECO:0000269" key="1">
    <source>
    </source>
</evidence>
<evidence type="ECO:0000303" key="2">
    <source>
    </source>
</evidence>
<evidence type="ECO:0000305" key="3"/>
<evidence type="ECO:0000305" key="4">
    <source>
    </source>
</evidence>
<proteinExistence type="evidence at protein level"/>
<reference evidence="3" key="1">
    <citation type="journal article" date="2014" name="Toxicon">
        <title>Influence of post-starvation extraction time and prey-specific diet in Tityus serrulatus scorpion venom composition and hyaluronidase activity.</title>
        <authorList>
            <person name="Pucca M.B."/>
            <person name="Amorim F.G."/>
            <person name="Cerni F.A."/>
            <person name="Bordon K.C.F."/>
            <person name="Cardoso I.A."/>
            <person name="Anjolette F.A."/>
            <person name="Arantes E.C."/>
        </authorList>
    </citation>
    <scope>PROTEIN SEQUENCE</scope>
    <scope>SUBCELLULAR LOCATION</scope>
    <source>
        <tissue evidence="2">Venom</tissue>
    </source>
</reference>
<comment type="subcellular location">
    <subcellularLocation>
        <location evidence="1">Secreted</location>
    </subcellularLocation>
</comment>
<comment type="tissue specificity">
    <text evidence="4">Expressed by the venom gland.</text>
</comment>
<dbReference type="GO" id="GO:0005576">
    <property type="term" value="C:extracellular region"/>
    <property type="evidence" value="ECO:0007669"/>
    <property type="project" value="UniProtKB-SubCell"/>
</dbReference>
<feature type="chain" id="PRO_0000433219" description="Peptide 9797" evidence="1">
    <location>
        <begin position="1"/>
        <end position="10" status="greater than"/>
    </location>
</feature>
<feature type="non-terminal residue" evidence="1">
    <location>
        <position position="10"/>
    </location>
</feature>